<comment type="function">
    <text evidence="1">Part of the Tol-Pal system, which plays a role in outer membrane invagination during cell division and is important for maintaining outer membrane integrity. TolB occupies a key intermediary position in the Tol-Pal system because it communicates directly with both membrane-embedded components, Pal in the outer membrane and TolA in the inner membrane.</text>
</comment>
<comment type="subunit">
    <text evidence="1">The Tol-Pal system is composed of five core proteins: the inner membrane proteins TolA, TolQ and TolR, the periplasmic protein TolB and the outer membrane protein Pal. They form a network linking the inner and outer membranes and the peptidoglycan layer.</text>
</comment>
<comment type="subcellular location">
    <subcellularLocation>
        <location evidence="1">Periplasm</location>
    </subcellularLocation>
</comment>
<comment type="similarity">
    <text evidence="1">Belongs to the TolB family.</text>
</comment>
<reference key="1">
    <citation type="submission" date="2008-02" db="EMBL/GenBank/DDBJ databases">
        <title>Complete sequence of Yersinia pseudotuberculosis YPIII.</title>
        <authorList>
            <consortium name="US DOE Joint Genome Institute"/>
            <person name="Copeland A."/>
            <person name="Lucas S."/>
            <person name="Lapidus A."/>
            <person name="Glavina del Rio T."/>
            <person name="Dalin E."/>
            <person name="Tice H."/>
            <person name="Bruce D."/>
            <person name="Goodwin L."/>
            <person name="Pitluck S."/>
            <person name="Munk A.C."/>
            <person name="Brettin T."/>
            <person name="Detter J.C."/>
            <person name="Han C."/>
            <person name="Tapia R."/>
            <person name="Schmutz J."/>
            <person name="Larimer F."/>
            <person name="Land M."/>
            <person name="Hauser L."/>
            <person name="Challacombe J.F."/>
            <person name="Green L."/>
            <person name="Lindler L.E."/>
            <person name="Nikolich M.P."/>
            <person name="Richardson P."/>
        </authorList>
    </citation>
    <scope>NUCLEOTIDE SEQUENCE [LARGE SCALE GENOMIC DNA]</scope>
    <source>
        <strain>YPIII</strain>
    </source>
</reference>
<protein>
    <recommendedName>
        <fullName evidence="1">Tol-Pal system protein TolB</fullName>
    </recommendedName>
</protein>
<accession>B1JG47</accession>
<proteinExistence type="inferred from homology"/>
<feature type="signal peptide" evidence="1">
    <location>
        <begin position="1"/>
        <end position="21"/>
    </location>
</feature>
<feature type="chain" id="PRO_5000315573" description="Tol-Pal system protein TolB" evidence="1">
    <location>
        <begin position="22"/>
        <end position="430"/>
    </location>
</feature>
<keyword id="KW-0131">Cell cycle</keyword>
<keyword id="KW-0132">Cell division</keyword>
<keyword id="KW-0574">Periplasm</keyword>
<keyword id="KW-0732">Signal</keyword>
<organism>
    <name type="scientific">Yersinia pseudotuberculosis serotype O:3 (strain YPIII)</name>
    <dbReference type="NCBI Taxonomy" id="502800"/>
    <lineage>
        <taxon>Bacteria</taxon>
        <taxon>Pseudomonadati</taxon>
        <taxon>Pseudomonadota</taxon>
        <taxon>Gammaproteobacteria</taxon>
        <taxon>Enterobacterales</taxon>
        <taxon>Yersiniaceae</taxon>
        <taxon>Yersinia</taxon>
    </lineage>
</organism>
<gene>
    <name evidence="1" type="primary">tolB</name>
    <name type="ordered locus">YPK_2956</name>
</gene>
<name>TOLB_YERPY</name>
<evidence type="ECO:0000255" key="1">
    <source>
        <dbReference type="HAMAP-Rule" id="MF_00671"/>
    </source>
</evidence>
<dbReference type="EMBL" id="CP000950">
    <property type="protein sequence ID" value="ACA69230.1"/>
    <property type="molecule type" value="Genomic_DNA"/>
</dbReference>
<dbReference type="RefSeq" id="WP_002210738.1">
    <property type="nucleotide sequence ID" value="NZ_CP009792.1"/>
</dbReference>
<dbReference type="SMR" id="B1JG47"/>
<dbReference type="GeneID" id="57977261"/>
<dbReference type="KEGG" id="ypy:YPK_2956"/>
<dbReference type="PATRIC" id="fig|502800.11.peg.3677"/>
<dbReference type="GO" id="GO:0042597">
    <property type="term" value="C:periplasmic space"/>
    <property type="evidence" value="ECO:0007669"/>
    <property type="project" value="UniProtKB-SubCell"/>
</dbReference>
<dbReference type="GO" id="GO:0051301">
    <property type="term" value="P:cell division"/>
    <property type="evidence" value="ECO:0007669"/>
    <property type="project" value="UniProtKB-UniRule"/>
</dbReference>
<dbReference type="GO" id="GO:0017038">
    <property type="term" value="P:protein import"/>
    <property type="evidence" value="ECO:0007669"/>
    <property type="project" value="InterPro"/>
</dbReference>
<dbReference type="FunFam" id="2.120.10.30:FF:000022">
    <property type="entry name" value="Tol-Pal system protein TolB"/>
    <property type="match status" value="1"/>
</dbReference>
<dbReference type="Gene3D" id="2.120.10.30">
    <property type="entry name" value="TolB, C-terminal domain"/>
    <property type="match status" value="1"/>
</dbReference>
<dbReference type="Gene3D" id="3.40.50.10070">
    <property type="entry name" value="TolB, N-terminal domain"/>
    <property type="match status" value="1"/>
</dbReference>
<dbReference type="HAMAP" id="MF_00671">
    <property type="entry name" value="TolB"/>
    <property type="match status" value="1"/>
</dbReference>
<dbReference type="InterPro" id="IPR011042">
    <property type="entry name" value="6-blade_b-propeller_TolB-like"/>
</dbReference>
<dbReference type="InterPro" id="IPR011659">
    <property type="entry name" value="PD40"/>
</dbReference>
<dbReference type="InterPro" id="IPR014167">
    <property type="entry name" value="Tol-Pal_TolB"/>
</dbReference>
<dbReference type="InterPro" id="IPR007195">
    <property type="entry name" value="TolB_N"/>
</dbReference>
<dbReference type="NCBIfam" id="TIGR02800">
    <property type="entry name" value="propeller_TolB"/>
    <property type="match status" value="1"/>
</dbReference>
<dbReference type="PANTHER" id="PTHR36842:SF1">
    <property type="entry name" value="PROTEIN TOLB"/>
    <property type="match status" value="1"/>
</dbReference>
<dbReference type="PANTHER" id="PTHR36842">
    <property type="entry name" value="PROTEIN TOLB HOMOLOG"/>
    <property type="match status" value="1"/>
</dbReference>
<dbReference type="Pfam" id="PF07676">
    <property type="entry name" value="PD40"/>
    <property type="match status" value="4"/>
</dbReference>
<dbReference type="Pfam" id="PF04052">
    <property type="entry name" value="TolB_N"/>
    <property type="match status" value="1"/>
</dbReference>
<dbReference type="SUPFAM" id="SSF52964">
    <property type="entry name" value="TolB, N-terminal domain"/>
    <property type="match status" value="1"/>
</dbReference>
<dbReference type="SUPFAM" id="SSF69304">
    <property type="entry name" value="Tricorn protease N-terminal domain"/>
    <property type="match status" value="1"/>
</dbReference>
<sequence length="430" mass="46045">MKQAFRVALGFLVLWASVLHAEVRIEITQGVDSARPIGVVPFKWMGPGTPPEEIGAIVGADLRNSGKFNPIDAARMPQQPSTAAEVTPAAWTALGIDAVVVGQVQPSADGSYVVSYQLVDTSGSAGSILAQNQYKVTKQWLRYSAHTVSDEVFEKLTGIKGAFRTRIAYVVKTNGGKFPHELRVSDYDGYNQFVVHRSPEPLMSPAWSPDGSKIAYVTFESGKSALVIQTLANGAIRQVASFPRHNGAPAFSPDGTKLAFALSKSGSLNLYVMDLASGQISQVTDGRSNNTEPSWFPDSQNLAYTSDQGGRPQVYKVNINGGVPQRITWEGSQNQNADVSPDGKFLVLVSSNGGAQHIAKQDLETGAVQVLTDTLLDETPSIAPNGTMVIYSSTQGLGSVLQLVSTDGRFKARLPATDGQVKFPAWSPYL</sequence>